<accession>P9WN61</accession>
<accession>L0TBA4</accession>
<accession>O53256</accession>
<accession>P64199</accession>
<reference key="1">
    <citation type="journal article" date="1998" name="Nature">
        <title>Deciphering the biology of Mycobacterium tuberculosis from the complete genome sequence.</title>
        <authorList>
            <person name="Cole S.T."/>
            <person name="Brosch R."/>
            <person name="Parkhill J."/>
            <person name="Garnier T."/>
            <person name="Churcher C.M."/>
            <person name="Harris D.E."/>
            <person name="Gordon S.V."/>
            <person name="Eiglmeier K."/>
            <person name="Gas S."/>
            <person name="Barry C.E. III"/>
            <person name="Tekaia F."/>
            <person name="Badcock K."/>
            <person name="Basham D."/>
            <person name="Brown D."/>
            <person name="Chillingworth T."/>
            <person name="Connor R."/>
            <person name="Davies R.M."/>
            <person name="Devlin K."/>
            <person name="Feltwell T."/>
            <person name="Gentles S."/>
            <person name="Hamlin N."/>
            <person name="Holroyd S."/>
            <person name="Hornsby T."/>
            <person name="Jagels K."/>
            <person name="Krogh A."/>
            <person name="McLean J."/>
            <person name="Moule S."/>
            <person name="Murphy L.D."/>
            <person name="Oliver S."/>
            <person name="Osborne J."/>
            <person name="Quail M.A."/>
            <person name="Rajandream M.A."/>
            <person name="Rogers J."/>
            <person name="Rutter S."/>
            <person name="Seeger K."/>
            <person name="Skelton S."/>
            <person name="Squares S."/>
            <person name="Squares R."/>
            <person name="Sulston J.E."/>
            <person name="Taylor K."/>
            <person name="Whitehead S."/>
            <person name="Barrell B.G."/>
        </authorList>
    </citation>
    <scope>NUCLEOTIDE SEQUENCE [LARGE SCALE GENOMIC DNA]</scope>
    <source>
        <strain>ATCC 25618 / H37Rv</strain>
    </source>
</reference>
<reference key="2">
    <citation type="journal article" date="2011" name="Mol. Cell. Proteomics">
        <title>Proteogenomic analysis of Mycobacterium tuberculosis by high resolution mass spectrometry.</title>
        <authorList>
            <person name="Kelkar D.S."/>
            <person name="Kumar D."/>
            <person name="Kumar P."/>
            <person name="Balakrishnan L."/>
            <person name="Muthusamy B."/>
            <person name="Yadav A.K."/>
            <person name="Shrivastava P."/>
            <person name="Marimuthu A."/>
            <person name="Anand S."/>
            <person name="Sundaram H."/>
            <person name="Kingsbury R."/>
            <person name="Harsha H.C."/>
            <person name="Nair B."/>
            <person name="Prasad T.S."/>
            <person name="Chauhan D.S."/>
            <person name="Katoch K."/>
            <person name="Katoch V.M."/>
            <person name="Kumar P."/>
            <person name="Chaerkady R."/>
            <person name="Ramachandran S."/>
            <person name="Dash D."/>
            <person name="Pandey A."/>
        </authorList>
    </citation>
    <scope>IDENTIFICATION BY MASS SPECTROMETRY [LARGE SCALE ANALYSIS]</scope>
    <source>
        <strain>ATCC 25618 / H37Rv</strain>
    </source>
</reference>
<organism>
    <name type="scientific">Mycobacterium tuberculosis (strain ATCC 25618 / H37Rv)</name>
    <dbReference type="NCBI Taxonomy" id="83332"/>
    <lineage>
        <taxon>Bacteria</taxon>
        <taxon>Bacillati</taxon>
        <taxon>Actinomycetota</taxon>
        <taxon>Actinomycetes</taxon>
        <taxon>Mycobacteriales</taxon>
        <taxon>Mycobacteriaceae</taxon>
        <taxon>Mycobacterium</taxon>
        <taxon>Mycobacterium tuberculosis complex</taxon>
    </lineage>
</organism>
<dbReference type="EC" id="6.3.5.-"/>
<dbReference type="EMBL" id="AL123456">
    <property type="protein sequence ID" value="CCP45815.1"/>
    <property type="molecule type" value="Genomic_DNA"/>
</dbReference>
<dbReference type="PIR" id="D70856">
    <property type="entry name" value="D70856"/>
</dbReference>
<dbReference type="RefSeq" id="NP_217525.1">
    <property type="nucleotide sequence ID" value="NC_000962.3"/>
</dbReference>
<dbReference type="RefSeq" id="WP_003415248.1">
    <property type="nucleotide sequence ID" value="NZ_NVQJ01000041.1"/>
</dbReference>
<dbReference type="SMR" id="P9WN61"/>
<dbReference type="FunCoup" id="P9WN61">
    <property type="interactions" value="462"/>
</dbReference>
<dbReference type="STRING" id="83332.Rv3009c"/>
<dbReference type="PaxDb" id="83332-Rv3009c"/>
<dbReference type="DNASU" id="888919"/>
<dbReference type="GeneID" id="888919"/>
<dbReference type="KEGG" id="mtu:Rv3009c"/>
<dbReference type="KEGG" id="mtv:RVBD_3009c"/>
<dbReference type="TubercuList" id="Rv3009c"/>
<dbReference type="eggNOG" id="COG0064">
    <property type="taxonomic scope" value="Bacteria"/>
</dbReference>
<dbReference type="InParanoid" id="P9WN61"/>
<dbReference type="OrthoDB" id="9804078at2"/>
<dbReference type="PhylomeDB" id="P9WN61"/>
<dbReference type="Proteomes" id="UP000001584">
    <property type="component" value="Chromosome"/>
</dbReference>
<dbReference type="GO" id="GO:0005886">
    <property type="term" value="C:plasma membrane"/>
    <property type="evidence" value="ECO:0007005"/>
    <property type="project" value="MTBBASE"/>
</dbReference>
<dbReference type="GO" id="GO:0050566">
    <property type="term" value="F:asparaginyl-tRNA synthase (glutamine-hydrolyzing) activity"/>
    <property type="evidence" value="ECO:0007669"/>
    <property type="project" value="RHEA"/>
</dbReference>
<dbReference type="GO" id="GO:0005524">
    <property type="term" value="F:ATP binding"/>
    <property type="evidence" value="ECO:0007669"/>
    <property type="project" value="UniProtKB-KW"/>
</dbReference>
<dbReference type="GO" id="GO:0050567">
    <property type="term" value="F:glutaminyl-tRNA synthase (glutamine-hydrolyzing) activity"/>
    <property type="evidence" value="ECO:0000318"/>
    <property type="project" value="GO_Central"/>
</dbReference>
<dbReference type="GO" id="GO:0070681">
    <property type="term" value="P:glutaminyl-tRNAGln biosynthesis via transamidation"/>
    <property type="evidence" value="ECO:0000318"/>
    <property type="project" value="GO_Central"/>
</dbReference>
<dbReference type="GO" id="GO:0006412">
    <property type="term" value="P:translation"/>
    <property type="evidence" value="ECO:0007669"/>
    <property type="project" value="UniProtKB-UniRule"/>
</dbReference>
<dbReference type="FunFam" id="1.10.10.410:FF:000002">
    <property type="entry name" value="Aspartyl/glutamyl-tRNA(Asn/Gln) amidotransferase subunit B"/>
    <property type="match status" value="1"/>
</dbReference>
<dbReference type="Gene3D" id="1.10.10.410">
    <property type="match status" value="1"/>
</dbReference>
<dbReference type="HAMAP" id="MF_00121">
    <property type="entry name" value="GatB"/>
    <property type="match status" value="1"/>
</dbReference>
<dbReference type="InterPro" id="IPR017959">
    <property type="entry name" value="Asn/Gln-tRNA_amidoTrfase_suB/E"/>
</dbReference>
<dbReference type="InterPro" id="IPR006075">
    <property type="entry name" value="Asn/Gln-tRNA_Trfase_suB/E_cat"/>
</dbReference>
<dbReference type="InterPro" id="IPR018027">
    <property type="entry name" value="Asn/Gln_amidotransferase"/>
</dbReference>
<dbReference type="InterPro" id="IPR003789">
    <property type="entry name" value="Asn/Gln_tRNA_amidoTrase-B-like"/>
</dbReference>
<dbReference type="InterPro" id="IPR004413">
    <property type="entry name" value="GatB"/>
</dbReference>
<dbReference type="InterPro" id="IPR023168">
    <property type="entry name" value="GatB_Yqey_C_2"/>
</dbReference>
<dbReference type="InterPro" id="IPR017958">
    <property type="entry name" value="Gln-tRNA_amidoTrfase_suB_CS"/>
</dbReference>
<dbReference type="InterPro" id="IPR014746">
    <property type="entry name" value="Gln_synth/guanido_kin_cat_dom"/>
</dbReference>
<dbReference type="NCBIfam" id="TIGR00133">
    <property type="entry name" value="gatB"/>
    <property type="match status" value="1"/>
</dbReference>
<dbReference type="NCBIfam" id="NF004012">
    <property type="entry name" value="PRK05477.1-2"/>
    <property type="match status" value="1"/>
</dbReference>
<dbReference type="NCBIfam" id="NF004013">
    <property type="entry name" value="PRK05477.1-3"/>
    <property type="match status" value="1"/>
</dbReference>
<dbReference type="NCBIfam" id="NF004014">
    <property type="entry name" value="PRK05477.1-4"/>
    <property type="match status" value="1"/>
</dbReference>
<dbReference type="PANTHER" id="PTHR11659">
    <property type="entry name" value="GLUTAMYL-TRNA GLN AMIDOTRANSFERASE SUBUNIT B MITOCHONDRIAL AND PROKARYOTIC PET112-RELATED"/>
    <property type="match status" value="1"/>
</dbReference>
<dbReference type="PANTHER" id="PTHR11659:SF0">
    <property type="entry name" value="GLUTAMYL-TRNA(GLN) AMIDOTRANSFERASE SUBUNIT B, MITOCHONDRIAL"/>
    <property type="match status" value="1"/>
</dbReference>
<dbReference type="Pfam" id="PF02934">
    <property type="entry name" value="GatB_N"/>
    <property type="match status" value="1"/>
</dbReference>
<dbReference type="Pfam" id="PF02637">
    <property type="entry name" value="GatB_Yqey"/>
    <property type="match status" value="1"/>
</dbReference>
<dbReference type="SMART" id="SM00845">
    <property type="entry name" value="GatB_Yqey"/>
    <property type="match status" value="1"/>
</dbReference>
<dbReference type="SUPFAM" id="SSF89095">
    <property type="entry name" value="GatB/YqeY motif"/>
    <property type="match status" value="1"/>
</dbReference>
<dbReference type="SUPFAM" id="SSF55931">
    <property type="entry name" value="Glutamine synthetase/guanido kinase"/>
    <property type="match status" value="1"/>
</dbReference>
<dbReference type="PROSITE" id="PS01234">
    <property type="entry name" value="GATB"/>
    <property type="match status" value="1"/>
</dbReference>
<comment type="function">
    <text evidence="1">Allows the formation of correctly charged Asn-tRNA(Asn) or Gln-tRNA(Gln) through the transamidation of misacylated Asp-tRNA(Asn) or Glu-tRNA(Gln) in organisms which lack either or both of asparaginyl-tRNA or glutaminyl-tRNA synthetases. The reaction takes place in the presence of glutamine and ATP through an activated phospho-Asp-tRNA(Asn) or phospho-Glu-tRNA(Gln) (By similarity).</text>
</comment>
<comment type="catalytic activity">
    <reaction>
        <text>L-glutamyl-tRNA(Gln) + L-glutamine + ATP + H2O = L-glutaminyl-tRNA(Gln) + L-glutamate + ADP + phosphate + H(+)</text>
        <dbReference type="Rhea" id="RHEA:17521"/>
        <dbReference type="Rhea" id="RHEA-COMP:9681"/>
        <dbReference type="Rhea" id="RHEA-COMP:9684"/>
        <dbReference type="ChEBI" id="CHEBI:15377"/>
        <dbReference type="ChEBI" id="CHEBI:15378"/>
        <dbReference type="ChEBI" id="CHEBI:29985"/>
        <dbReference type="ChEBI" id="CHEBI:30616"/>
        <dbReference type="ChEBI" id="CHEBI:43474"/>
        <dbReference type="ChEBI" id="CHEBI:58359"/>
        <dbReference type="ChEBI" id="CHEBI:78520"/>
        <dbReference type="ChEBI" id="CHEBI:78521"/>
        <dbReference type="ChEBI" id="CHEBI:456216"/>
    </reaction>
</comment>
<comment type="catalytic activity">
    <reaction>
        <text>L-aspartyl-tRNA(Asn) + L-glutamine + ATP + H2O = L-asparaginyl-tRNA(Asn) + L-glutamate + ADP + phosphate + 2 H(+)</text>
        <dbReference type="Rhea" id="RHEA:14513"/>
        <dbReference type="Rhea" id="RHEA-COMP:9674"/>
        <dbReference type="Rhea" id="RHEA-COMP:9677"/>
        <dbReference type="ChEBI" id="CHEBI:15377"/>
        <dbReference type="ChEBI" id="CHEBI:15378"/>
        <dbReference type="ChEBI" id="CHEBI:29985"/>
        <dbReference type="ChEBI" id="CHEBI:30616"/>
        <dbReference type="ChEBI" id="CHEBI:43474"/>
        <dbReference type="ChEBI" id="CHEBI:58359"/>
        <dbReference type="ChEBI" id="CHEBI:78515"/>
        <dbReference type="ChEBI" id="CHEBI:78516"/>
        <dbReference type="ChEBI" id="CHEBI:456216"/>
    </reaction>
</comment>
<comment type="subunit">
    <text evidence="1">Heterotrimer of A, B and C subunits.</text>
</comment>
<comment type="similarity">
    <text evidence="2">Belongs to the GatB/GatE family. GatB subfamily.</text>
</comment>
<name>GATB_MYCTU</name>
<feature type="chain" id="PRO_0000148814" description="Aspartyl/glutamyl-tRNA(Asn/Gln) amidotransferase subunit B">
    <location>
        <begin position="1"/>
        <end position="509"/>
    </location>
</feature>
<keyword id="KW-0067">ATP-binding</keyword>
<keyword id="KW-0436">Ligase</keyword>
<keyword id="KW-0547">Nucleotide-binding</keyword>
<keyword id="KW-0648">Protein biosynthesis</keyword>
<keyword id="KW-1185">Reference proteome</keyword>
<proteinExistence type="evidence at protein level"/>
<gene>
    <name type="primary">gatB</name>
    <name type="ordered locus">Rv3009c</name>
    <name type="ORF">MTV012.23c</name>
</gene>
<protein>
    <recommendedName>
        <fullName>Aspartyl/glutamyl-tRNA(Asn/Gln) amidotransferase subunit B</fullName>
        <shortName>Asp/Glu-ADT subunit B</shortName>
        <ecNumber>6.3.5.-</ecNumber>
    </recommendedName>
</protein>
<evidence type="ECO:0000250" key="1"/>
<evidence type="ECO:0000305" key="2"/>
<sequence length="509" mass="54633">MTVAAGAAKAAGAELLDYDEVVARFQPVLGLEVHVELSTATKMFCGCTTTFGGEPNTQVCPVCLGLPGSLPVLNRAAVESAIRIGLALNCEIVPWCRFARKNYFYPDMPKNYQISQYDEPIAINGYLDAPLEDGTTWRVEIERAHMEEDTGKLTHIGSETGRIHGATGSLIDYNRAGVPLIEIVTKPIVGAGARAPQIARSYVTALRDLLRALDVSDVRMDQGSMRCDANVSLKPAGTTEFGTRTETKNVNSLKSVEVAVRYEMQRQGAILASGGRITQETRHFHEAGYTSAGRTKETAEDYRYFPEPDLEPVAPSRELVERLRQTIPELPWLSRRRIQQEWGVSDEVMRDLVNAGAVELVAATVEHGASSEAARAWWGNFLAQKANEAGIGLDELAITPAQVAAVVALVDEGKLSNSLARQVVEGVLAGEGEPEQVMTARGLALVRDDSLTQAAVDEALAANPDVADKIRGGKVAAAGAIVGAVMKATRGQADAARVRELVLEACGQG</sequence>